<dbReference type="EC" id="2.3.1.1" evidence="1"/>
<dbReference type="EMBL" id="BA000037">
    <property type="protein sequence ID" value="BAC95375.1"/>
    <property type="molecule type" value="Genomic_DNA"/>
</dbReference>
<dbReference type="RefSeq" id="WP_011079707.1">
    <property type="nucleotide sequence ID" value="NC_005139.1"/>
</dbReference>
<dbReference type="SMR" id="Q7MIA6"/>
<dbReference type="STRING" id="672.VV93_v1c23260"/>
<dbReference type="KEGG" id="vvy:VV2611"/>
<dbReference type="PATRIC" id="fig|196600.6.peg.2613"/>
<dbReference type="eggNOG" id="COG0548">
    <property type="taxonomic scope" value="Bacteria"/>
</dbReference>
<dbReference type="eggNOG" id="COG1246">
    <property type="taxonomic scope" value="Bacteria"/>
</dbReference>
<dbReference type="HOGENOM" id="CLU_024773_0_0_6"/>
<dbReference type="UniPathway" id="UPA00068">
    <property type="reaction ID" value="UER00106"/>
</dbReference>
<dbReference type="Proteomes" id="UP000002675">
    <property type="component" value="Chromosome I"/>
</dbReference>
<dbReference type="GO" id="GO:0005737">
    <property type="term" value="C:cytoplasm"/>
    <property type="evidence" value="ECO:0007669"/>
    <property type="project" value="UniProtKB-SubCell"/>
</dbReference>
<dbReference type="GO" id="GO:0004042">
    <property type="term" value="F:L-glutamate N-acetyltransferase activity"/>
    <property type="evidence" value="ECO:0007669"/>
    <property type="project" value="UniProtKB-UniRule"/>
</dbReference>
<dbReference type="GO" id="GO:0006526">
    <property type="term" value="P:L-arginine biosynthetic process"/>
    <property type="evidence" value="ECO:0007669"/>
    <property type="project" value="UniProtKB-UniRule"/>
</dbReference>
<dbReference type="CDD" id="cd04237">
    <property type="entry name" value="AAK_NAGS-ABP"/>
    <property type="match status" value="1"/>
</dbReference>
<dbReference type="CDD" id="cd04301">
    <property type="entry name" value="NAT_SF"/>
    <property type="match status" value="1"/>
</dbReference>
<dbReference type="FunFam" id="3.40.1160.10:FF:000005">
    <property type="entry name" value="Amino-acid acetyltransferase"/>
    <property type="match status" value="1"/>
</dbReference>
<dbReference type="Gene3D" id="3.40.630.30">
    <property type="match status" value="1"/>
</dbReference>
<dbReference type="Gene3D" id="3.40.1160.10">
    <property type="entry name" value="Acetylglutamate kinase-like"/>
    <property type="match status" value="1"/>
</dbReference>
<dbReference type="HAMAP" id="MF_01105">
    <property type="entry name" value="N_acetyl_glu_synth"/>
    <property type="match status" value="1"/>
</dbReference>
<dbReference type="InterPro" id="IPR036393">
    <property type="entry name" value="AceGlu_kinase-like_sf"/>
</dbReference>
<dbReference type="InterPro" id="IPR016181">
    <property type="entry name" value="Acyl_CoA_acyltransferase"/>
</dbReference>
<dbReference type="InterPro" id="IPR001048">
    <property type="entry name" value="Asp/Glu/Uridylate_kinase"/>
</dbReference>
<dbReference type="InterPro" id="IPR000182">
    <property type="entry name" value="GNAT_dom"/>
</dbReference>
<dbReference type="InterPro" id="IPR033719">
    <property type="entry name" value="NAGS_kin"/>
</dbReference>
<dbReference type="InterPro" id="IPR010167">
    <property type="entry name" value="NH2A_AcTrfase"/>
</dbReference>
<dbReference type="NCBIfam" id="TIGR01890">
    <property type="entry name" value="N-Ac-Glu-synth"/>
    <property type="match status" value="1"/>
</dbReference>
<dbReference type="NCBIfam" id="NF003641">
    <property type="entry name" value="PRK05279.1"/>
    <property type="match status" value="1"/>
</dbReference>
<dbReference type="PANTHER" id="PTHR30602">
    <property type="entry name" value="AMINO-ACID ACETYLTRANSFERASE"/>
    <property type="match status" value="1"/>
</dbReference>
<dbReference type="PANTHER" id="PTHR30602:SF12">
    <property type="entry name" value="AMINO-ACID ACETYLTRANSFERASE NAGS1, CHLOROPLASTIC-RELATED"/>
    <property type="match status" value="1"/>
</dbReference>
<dbReference type="Pfam" id="PF00696">
    <property type="entry name" value="AA_kinase"/>
    <property type="match status" value="1"/>
</dbReference>
<dbReference type="Pfam" id="PF00583">
    <property type="entry name" value="Acetyltransf_1"/>
    <property type="match status" value="1"/>
</dbReference>
<dbReference type="PIRSF" id="PIRSF000423">
    <property type="entry name" value="ArgA"/>
    <property type="match status" value="1"/>
</dbReference>
<dbReference type="SUPFAM" id="SSF55729">
    <property type="entry name" value="Acyl-CoA N-acyltransferases (Nat)"/>
    <property type="match status" value="1"/>
</dbReference>
<dbReference type="SUPFAM" id="SSF53633">
    <property type="entry name" value="Carbamate kinase-like"/>
    <property type="match status" value="1"/>
</dbReference>
<dbReference type="PROSITE" id="PS51186">
    <property type="entry name" value="GNAT"/>
    <property type="match status" value="1"/>
</dbReference>
<comment type="catalytic activity">
    <reaction evidence="1">
        <text>L-glutamate + acetyl-CoA = N-acetyl-L-glutamate + CoA + H(+)</text>
        <dbReference type="Rhea" id="RHEA:24292"/>
        <dbReference type="ChEBI" id="CHEBI:15378"/>
        <dbReference type="ChEBI" id="CHEBI:29985"/>
        <dbReference type="ChEBI" id="CHEBI:44337"/>
        <dbReference type="ChEBI" id="CHEBI:57287"/>
        <dbReference type="ChEBI" id="CHEBI:57288"/>
        <dbReference type="EC" id="2.3.1.1"/>
    </reaction>
</comment>
<comment type="pathway">
    <text evidence="1">Amino-acid biosynthesis; L-arginine biosynthesis; N(2)-acetyl-L-ornithine from L-glutamate: step 1/4.</text>
</comment>
<comment type="subcellular location">
    <subcellularLocation>
        <location evidence="1">Cytoplasm</location>
    </subcellularLocation>
</comment>
<comment type="similarity">
    <text evidence="1">Belongs to the acetyltransferase family. ArgA subfamily.</text>
</comment>
<gene>
    <name evidence="1" type="primary">argA</name>
    <name type="ordered locus">VV2611</name>
</gene>
<organism>
    <name type="scientific">Vibrio vulnificus (strain YJ016)</name>
    <dbReference type="NCBI Taxonomy" id="196600"/>
    <lineage>
        <taxon>Bacteria</taxon>
        <taxon>Pseudomonadati</taxon>
        <taxon>Pseudomonadota</taxon>
        <taxon>Gammaproteobacteria</taxon>
        <taxon>Vibrionales</taxon>
        <taxon>Vibrionaceae</taxon>
        <taxon>Vibrio</taxon>
    </lineage>
</organism>
<accession>Q7MIA6</accession>
<proteinExistence type="inferred from homology"/>
<feature type="chain" id="PRO_0000186811" description="Amino-acid acetyltransferase">
    <location>
        <begin position="1"/>
        <end position="445"/>
    </location>
</feature>
<feature type="domain" description="N-acetyltransferase" evidence="1">
    <location>
        <begin position="299"/>
        <end position="438"/>
    </location>
</feature>
<keyword id="KW-0012">Acyltransferase</keyword>
<keyword id="KW-0028">Amino-acid biosynthesis</keyword>
<keyword id="KW-0055">Arginine biosynthesis</keyword>
<keyword id="KW-0963">Cytoplasm</keyword>
<keyword id="KW-0808">Transferase</keyword>
<name>ARGA_VIBVY</name>
<reference key="1">
    <citation type="journal article" date="2003" name="Genome Res.">
        <title>Comparative genome analysis of Vibrio vulnificus, a marine pathogen.</title>
        <authorList>
            <person name="Chen C.-Y."/>
            <person name="Wu K.-M."/>
            <person name="Chang Y.-C."/>
            <person name="Chang C.-H."/>
            <person name="Tsai H.-C."/>
            <person name="Liao T.-L."/>
            <person name="Liu Y.-M."/>
            <person name="Chen H.-J."/>
            <person name="Shen A.B.-T."/>
            <person name="Li J.-C."/>
            <person name="Su T.-L."/>
            <person name="Shao C.-P."/>
            <person name="Lee C.-T."/>
            <person name="Hor L.-I."/>
            <person name="Tsai S.-F."/>
        </authorList>
    </citation>
    <scope>NUCLEOTIDE SEQUENCE [LARGE SCALE GENOMIC DNA]</scope>
    <source>
        <strain>YJ016</strain>
    </source>
</reference>
<protein>
    <recommendedName>
        <fullName evidence="1">Amino-acid acetyltransferase</fullName>
        <ecNumber evidence="1">2.3.1.1</ecNumber>
    </recommendedName>
    <alternativeName>
        <fullName evidence="1">N-acetylglutamate synthase</fullName>
        <shortName evidence="1">AGS</shortName>
        <shortName evidence="1">NAGS</shortName>
    </alternativeName>
</protein>
<sequence length="445" mass="49033">MKIRSTALVKGFRQSTPYVNAHRGKTMVILLGGEAIADKNFSNIINDIALMHSLGVKVVLVYGARPQINQLLDKQSSQTPYHKHIRVTDENSLSIVMQAAGQLQLAITASLSMSLNNTPMAGTHLNVVSGNFVIAQPLGIDEGVDYCHSGRIRRIDTEAINRSLDQGSIVLLGPIASSVTGECFNLLSEEVATQVAIKLKADKLIGFCSEQGVIDEEGNAVAELFPSDAEKFIQKLSVDVDPDSDFHSGTLRFLKGAVAACRAGVPRSHLISYKIDGALIQELFSFDGIGTQVVMASAEQVRQACIDDIGGILELIRPLEEQGILVRRSREQLEQEVERFTIIEKDGLIIGCAALYPYIDEHMAEMACVAIHPDYRDGNRGLLLLNYMKHRSKSIGIEQIFVLTTHSVHWFREQGFYEIGVDSLPMAKKSLYNYQRRSKILALPL</sequence>
<evidence type="ECO:0000255" key="1">
    <source>
        <dbReference type="HAMAP-Rule" id="MF_01105"/>
    </source>
</evidence>